<comment type="function">
    <text evidence="1">Required for the production of circadian rhythms. The biological cycle depends on the rhythmic formation and nuclear localization of the TIM-PER complex. Light induces the degradation of TIM, which promotes elimination of PER. Nuclear activity of the heterodimer coordinatively regulates PER and TIM transcription through a negative feedback loop. Behaves as a negative element in circadian transcriptional loop. Does not appear to bind DNA, suggesting indirect transcriptional inhibition (By similarity).</text>
</comment>
<comment type="subunit">
    <text evidence="1">Forms a heterodimer with period (PER); the complex then translocates into the nucleus.</text>
</comment>
<comment type="subcellular location">
    <subcellularLocation>
        <location evidence="2">Nucleus</location>
    </subcellularLocation>
    <subcellularLocation>
        <location evidence="2">Cytoplasm</location>
        <location evidence="2">Perinuclear region</location>
    </subcellularLocation>
    <text evidence="2">Nuclear at specific periods of the day. First accumulates in the perinuclear region about one hour before translocation into the nucleus. Interaction with per is required for nuclear localization.</text>
</comment>
<comment type="domain">
    <text evidence="1">Contains a 32 AA domain highly conserved between species. Deletion of this domain leads to long-period phenotype and arrhythmia (By similarity).</text>
</comment>
<comment type="PTM">
    <text evidence="1">Phosphorylated with a circadian rhythmicity.</text>
</comment>
<comment type="similarity">
    <text evidence="5">Belongs to the timeless family.</text>
</comment>
<feature type="chain" id="PRO_0000072536" description="Protein timeless">
    <location>
        <begin position="1" status="less than"/>
        <end position="676" status="greater than"/>
    </location>
</feature>
<feature type="region of interest" description="Necessary for normal circadian rhythm" evidence="1">
    <location>
        <begin position="77"/>
        <end position="108"/>
    </location>
</feature>
<feature type="region of interest" description="Disordered" evidence="4">
    <location>
        <begin position="94"/>
        <end position="145"/>
    </location>
</feature>
<feature type="region of interest" description="Disordered" evidence="4">
    <location>
        <begin position="346"/>
        <end position="398"/>
    </location>
</feature>
<feature type="short sequence motif" description="Nuclear localization signal" evidence="3">
    <location>
        <begin position="388"/>
        <end position="398"/>
    </location>
</feature>
<feature type="compositionally biased region" description="Low complexity" evidence="4">
    <location>
        <begin position="101"/>
        <end position="129"/>
    </location>
</feature>
<feature type="compositionally biased region" description="Low complexity" evidence="4">
    <location>
        <begin position="360"/>
        <end position="369"/>
    </location>
</feature>
<feature type="non-terminal residue">
    <location>
        <position position="1"/>
    </location>
</feature>
<feature type="non-terminal residue">
    <location>
        <position position="676"/>
    </location>
</feature>
<proteinExistence type="inferred from homology"/>
<organism>
    <name type="scientific">Drosophila hydei</name>
    <name type="common">Fruit fly</name>
    <dbReference type="NCBI Taxonomy" id="7224"/>
    <lineage>
        <taxon>Eukaryota</taxon>
        <taxon>Metazoa</taxon>
        <taxon>Ecdysozoa</taxon>
        <taxon>Arthropoda</taxon>
        <taxon>Hexapoda</taxon>
        <taxon>Insecta</taxon>
        <taxon>Pterygota</taxon>
        <taxon>Neoptera</taxon>
        <taxon>Endopterygota</taxon>
        <taxon>Diptera</taxon>
        <taxon>Brachycera</taxon>
        <taxon>Muscomorpha</taxon>
        <taxon>Ephydroidea</taxon>
        <taxon>Drosophilidae</taxon>
        <taxon>Drosophila</taxon>
    </lineage>
</organism>
<sequence length="676" mass="76023">MLLRNILHIPETHAHFLMPVLQSSGGHQVSMQNTILWNLFIQSIDKLLLYLMTCPQRALWGVTMVQLIAMIYKDQHVNTLQKLLNLWFEASLSESSEDNESNTSPPKKGSGDSSPMLTSDPTSDSSDNGSNGGGSSGKKEGCDERRQALREGTEATLQEVSRKGHDYQNAMARVTADKPDISEVASDSFEVPCSPQQHLNTEEAMDDIDYEEQVQEYEQEAAAVSSEPLNLSQPANNVNYTTNAVYASTTATETQTTSSLCAMTSLCYEPFKPPAPLPTRRNTLSEMLSDNYTSHSHVSAVKLGQKSSHAGQLQLTKGKCCPQKRECPSSQSELSDCGYATQVENPESISTSSNDDDGPQGKPQHQKPPCNTKPRNKQRTLMSPQDKKELRRKKLVKRSKSSLINMKGLVQHTPTNYDISNLLKEFTVDFLLKGYNYLVEELLKQLLTSAKVLIDTSHFFWLVTFFLKLAAQLELDMEHIDSILTYDVLSYLTYEGVSLCEQLELNAQQEGSDLQPYLRRMHLVVTAIREFLQTIETYNKVSHLSEDDRLRLHQLQLQIGATTDLRCLFVLLLRRFNPRIHSKQYLQDLVVTNHILMLILDSAAKLEGGQTIGLSEHISQFATLEVMHYYGILLEDFDNNGEFVNDCIFTMMHHIGGDLGQIGVLFQPIILKTYSR</sequence>
<protein>
    <recommendedName>
        <fullName>Protein timeless</fullName>
    </recommendedName>
</protein>
<evidence type="ECO:0000250" key="1"/>
<evidence type="ECO:0000250" key="2">
    <source>
        <dbReference type="UniProtKB" id="P49021"/>
    </source>
</evidence>
<evidence type="ECO:0000255" key="3"/>
<evidence type="ECO:0000256" key="4">
    <source>
        <dbReference type="SAM" id="MobiDB-lite"/>
    </source>
</evidence>
<evidence type="ECO:0000305" key="5"/>
<reference key="1">
    <citation type="journal article" date="1998" name="Genetics">
        <title>Conserved regions of the timeless (tim) clock gene in Drosophila analyzed through phylogenetic and functional studies.</title>
        <authorList>
            <person name="Ousley A."/>
            <person name="Zafarullah K."/>
            <person name="Chen Y."/>
            <person name="Emerson M."/>
            <person name="Hickman L."/>
            <person name="Sehgal A."/>
        </authorList>
    </citation>
    <scope>NUCLEOTIDE SEQUENCE [GENOMIC DNA]</scope>
</reference>
<accession>O44431</accession>
<dbReference type="EMBL" id="AF038579">
    <property type="protein sequence ID" value="AAB92669.1"/>
    <property type="molecule type" value="Genomic_DNA"/>
</dbReference>
<dbReference type="SMR" id="O44431"/>
<dbReference type="OrthoDB" id="6429365at2759"/>
<dbReference type="Proteomes" id="UP000504633">
    <property type="component" value="Unplaced"/>
</dbReference>
<dbReference type="GO" id="GO:0048471">
    <property type="term" value="C:perinuclear region of cytoplasm"/>
    <property type="evidence" value="ECO:0007669"/>
    <property type="project" value="UniProtKB-SubCell"/>
</dbReference>
<dbReference type="GO" id="GO:0031298">
    <property type="term" value="C:replication fork protection complex"/>
    <property type="evidence" value="ECO:0007669"/>
    <property type="project" value="TreeGrafter"/>
</dbReference>
<dbReference type="GO" id="GO:0003677">
    <property type="term" value="F:DNA binding"/>
    <property type="evidence" value="ECO:0007669"/>
    <property type="project" value="TreeGrafter"/>
</dbReference>
<dbReference type="GO" id="GO:0006281">
    <property type="term" value="P:DNA repair"/>
    <property type="evidence" value="ECO:0007669"/>
    <property type="project" value="TreeGrafter"/>
</dbReference>
<dbReference type="GO" id="GO:0000076">
    <property type="term" value="P:DNA replication checkpoint signaling"/>
    <property type="evidence" value="ECO:0007669"/>
    <property type="project" value="TreeGrafter"/>
</dbReference>
<dbReference type="GO" id="GO:0009649">
    <property type="term" value="P:entrainment of circadian clock"/>
    <property type="evidence" value="ECO:0007669"/>
    <property type="project" value="TreeGrafter"/>
</dbReference>
<dbReference type="GO" id="GO:0043111">
    <property type="term" value="P:replication fork arrest"/>
    <property type="evidence" value="ECO:0007669"/>
    <property type="project" value="TreeGrafter"/>
</dbReference>
<dbReference type="GO" id="GO:0048511">
    <property type="term" value="P:rhythmic process"/>
    <property type="evidence" value="ECO:0007669"/>
    <property type="project" value="UniProtKB-KW"/>
</dbReference>
<dbReference type="InterPro" id="IPR044998">
    <property type="entry name" value="Timeless"/>
</dbReference>
<dbReference type="InterPro" id="IPR006906">
    <property type="entry name" value="Timeless_N"/>
</dbReference>
<dbReference type="PANTHER" id="PTHR22940:SF5">
    <property type="entry name" value="PROTEIN TIMELESS"/>
    <property type="match status" value="1"/>
</dbReference>
<dbReference type="PANTHER" id="PTHR22940">
    <property type="entry name" value="TIMEOUT/TIMELESS-2"/>
    <property type="match status" value="1"/>
</dbReference>
<dbReference type="Pfam" id="PF04821">
    <property type="entry name" value="TIMELESS"/>
    <property type="match status" value="1"/>
</dbReference>
<name>TIM_DROHY</name>
<gene>
    <name type="primary">tim</name>
</gene>
<keyword id="KW-0090">Biological rhythms</keyword>
<keyword id="KW-0963">Cytoplasm</keyword>
<keyword id="KW-0539">Nucleus</keyword>
<keyword id="KW-0597">Phosphoprotein</keyword>
<keyword id="KW-0677">Repeat</keyword>